<accession>C5BFB3</accession>
<name>GLMM_EDWI9</name>
<gene>
    <name evidence="1" type="primary">glmM</name>
    <name type="ordered locus">NT01EI_0461</name>
</gene>
<organism>
    <name type="scientific">Edwardsiella ictaluri (strain 93-146)</name>
    <dbReference type="NCBI Taxonomy" id="634503"/>
    <lineage>
        <taxon>Bacteria</taxon>
        <taxon>Pseudomonadati</taxon>
        <taxon>Pseudomonadota</taxon>
        <taxon>Gammaproteobacteria</taxon>
        <taxon>Enterobacterales</taxon>
        <taxon>Hafniaceae</taxon>
        <taxon>Edwardsiella</taxon>
    </lineage>
</organism>
<sequence length="445" mass="47326">MSERKYFGTDGIRGKVGSSPITPDFVLKLGWAAGKVLARHGSRKIIIGKDTRISGYMLESALEAGLAAAGLSAAFTGPMPTPAVAYLTRTFRAEAGIVISASHNPYYDNGIKFFSIDGTKLPDEVEAAIEAELDKPLTCVESAELGKASRIVDAAGRYIEFCKSTFPNALSLSGLKIVADCANGATYHIAPNVLRELGAEVITIGTSPDGMNINKECGATDVRALQARVVAENADLGMAFDGDGDRLIMVDHRGDKVDGDQILYIVAREALRQGKLHGGVVGTLMSNMGLELALKQLGIPFARAKVGDRYVLETMQEKGWRMGAENSGHVIILDQTTTGDGIVAGLQVLAAMARNHMSLTDLCSGMTLLPQVLVNVRFAGQCDPLQDTAVQHSCAEVERQLAGRGRVLLRKSGTEPLIRVMVEGEDLQQVTDLANTIADAVKAAS</sequence>
<keyword id="KW-0413">Isomerase</keyword>
<keyword id="KW-0460">Magnesium</keyword>
<keyword id="KW-0479">Metal-binding</keyword>
<keyword id="KW-0597">Phosphoprotein</keyword>
<comment type="function">
    <text evidence="1">Catalyzes the conversion of glucosamine-6-phosphate to glucosamine-1-phosphate.</text>
</comment>
<comment type="catalytic activity">
    <reaction evidence="1">
        <text>alpha-D-glucosamine 1-phosphate = D-glucosamine 6-phosphate</text>
        <dbReference type="Rhea" id="RHEA:23424"/>
        <dbReference type="ChEBI" id="CHEBI:58516"/>
        <dbReference type="ChEBI" id="CHEBI:58725"/>
        <dbReference type="EC" id="5.4.2.10"/>
    </reaction>
</comment>
<comment type="cofactor">
    <cofactor evidence="1">
        <name>Mg(2+)</name>
        <dbReference type="ChEBI" id="CHEBI:18420"/>
    </cofactor>
    <text evidence="1">Binds 1 Mg(2+) ion per subunit.</text>
</comment>
<comment type="PTM">
    <text evidence="1">Activated by phosphorylation.</text>
</comment>
<comment type="similarity">
    <text evidence="1">Belongs to the phosphohexose mutase family.</text>
</comment>
<protein>
    <recommendedName>
        <fullName evidence="1">Phosphoglucosamine mutase</fullName>
        <ecNumber evidence="1">5.4.2.10</ecNumber>
    </recommendedName>
</protein>
<reference key="1">
    <citation type="submission" date="2009-03" db="EMBL/GenBank/DDBJ databases">
        <title>Complete genome sequence of Edwardsiella ictaluri 93-146.</title>
        <authorList>
            <person name="Williams M.L."/>
            <person name="Gillaspy A.F."/>
            <person name="Dyer D.W."/>
            <person name="Thune R.L."/>
            <person name="Waldbieser G.C."/>
            <person name="Schuster S.C."/>
            <person name="Gipson J."/>
            <person name="Zaitshik J."/>
            <person name="Landry C."/>
            <person name="Lawrence M.L."/>
        </authorList>
    </citation>
    <scope>NUCLEOTIDE SEQUENCE [LARGE SCALE GENOMIC DNA]</scope>
    <source>
        <strain>93-146</strain>
    </source>
</reference>
<feature type="chain" id="PRO_1000215489" description="Phosphoglucosamine mutase">
    <location>
        <begin position="1"/>
        <end position="445"/>
    </location>
</feature>
<feature type="active site" description="Phosphoserine intermediate" evidence="1">
    <location>
        <position position="102"/>
    </location>
</feature>
<feature type="binding site" description="via phosphate group" evidence="1">
    <location>
        <position position="102"/>
    </location>
    <ligand>
        <name>Mg(2+)</name>
        <dbReference type="ChEBI" id="CHEBI:18420"/>
    </ligand>
</feature>
<feature type="binding site" evidence="1">
    <location>
        <position position="241"/>
    </location>
    <ligand>
        <name>Mg(2+)</name>
        <dbReference type="ChEBI" id="CHEBI:18420"/>
    </ligand>
</feature>
<feature type="binding site" evidence="1">
    <location>
        <position position="243"/>
    </location>
    <ligand>
        <name>Mg(2+)</name>
        <dbReference type="ChEBI" id="CHEBI:18420"/>
    </ligand>
</feature>
<feature type="binding site" evidence="1">
    <location>
        <position position="245"/>
    </location>
    <ligand>
        <name>Mg(2+)</name>
        <dbReference type="ChEBI" id="CHEBI:18420"/>
    </ligand>
</feature>
<feature type="modified residue" description="Phosphoserine" evidence="1">
    <location>
        <position position="102"/>
    </location>
</feature>
<dbReference type="EC" id="5.4.2.10" evidence="1"/>
<dbReference type="EMBL" id="CP001600">
    <property type="protein sequence ID" value="ACR67699.1"/>
    <property type="molecule type" value="Genomic_DNA"/>
</dbReference>
<dbReference type="RefSeq" id="WP_015869901.1">
    <property type="nucleotide sequence ID" value="NZ_CP169062.1"/>
</dbReference>
<dbReference type="SMR" id="C5BFB3"/>
<dbReference type="STRING" id="67780.B6E78_13065"/>
<dbReference type="GeneID" id="69537548"/>
<dbReference type="KEGG" id="eic:NT01EI_0461"/>
<dbReference type="PATRIC" id="fig|634503.3.peg.420"/>
<dbReference type="HOGENOM" id="CLU_016950_7_0_6"/>
<dbReference type="OrthoDB" id="9803322at2"/>
<dbReference type="Proteomes" id="UP000001485">
    <property type="component" value="Chromosome"/>
</dbReference>
<dbReference type="GO" id="GO:0005829">
    <property type="term" value="C:cytosol"/>
    <property type="evidence" value="ECO:0007669"/>
    <property type="project" value="TreeGrafter"/>
</dbReference>
<dbReference type="GO" id="GO:0000287">
    <property type="term" value="F:magnesium ion binding"/>
    <property type="evidence" value="ECO:0007669"/>
    <property type="project" value="UniProtKB-UniRule"/>
</dbReference>
<dbReference type="GO" id="GO:0008966">
    <property type="term" value="F:phosphoglucosamine mutase activity"/>
    <property type="evidence" value="ECO:0007669"/>
    <property type="project" value="UniProtKB-UniRule"/>
</dbReference>
<dbReference type="GO" id="GO:0004615">
    <property type="term" value="F:phosphomannomutase activity"/>
    <property type="evidence" value="ECO:0007669"/>
    <property type="project" value="TreeGrafter"/>
</dbReference>
<dbReference type="GO" id="GO:0005975">
    <property type="term" value="P:carbohydrate metabolic process"/>
    <property type="evidence" value="ECO:0007669"/>
    <property type="project" value="InterPro"/>
</dbReference>
<dbReference type="GO" id="GO:0009252">
    <property type="term" value="P:peptidoglycan biosynthetic process"/>
    <property type="evidence" value="ECO:0007669"/>
    <property type="project" value="TreeGrafter"/>
</dbReference>
<dbReference type="GO" id="GO:0006048">
    <property type="term" value="P:UDP-N-acetylglucosamine biosynthetic process"/>
    <property type="evidence" value="ECO:0007669"/>
    <property type="project" value="TreeGrafter"/>
</dbReference>
<dbReference type="CDD" id="cd05802">
    <property type="entry name" value="GlmM"/>
    <property type="match status" value="1"/>
</dbReference>
<dbReference type="FunFam" id="3.30.310.50:FF:000001">
    <property type="entry name" value="Phosphoglucosamine mutase"/>
    <property type="match status" value="1"/>
</dbReference>
<dbReference type="FunFam" id="3.40.120.10:FF:000001">
    <property type="entry name" value="Phosphoglucosamine mutase"/>
    <property type="match status" value="1"/>
</dbReference>
<dbReference type="FunFam" id="3.40.120.10:FF:000002">
    <property type="entry name" value="Phosphoglucosamine mutase"/>
    <property type="match status" value="1"/>
</dbReference>
<dbReference type="Gene3D" id="3.40.120.10">
    <property type="entry name" value="Alpha-D-Glucose-1,6-Bisphosphate, subunit A, domain 3"/>
    <property type="match status" value="3"/>
</dbReference>
<dbReference type="Gene3D" id="3.30.310.50">
    <property type="entry name" value="Alpha-D-phosphohexomutase, C-terminal domain"/>
    <property type="match status" value="1"/>
</dbReference>
<dbReference type="HAMAP" id="MF_01554_B">
    <property type="entry name" value="GlmM_B"/>
    <property type="match status" value="1"/>
</dbReference>
<dbReference type="InterPro" id="IPR005844">
    <property type="entry name" value="A-D-PHexomutase_a/b/a-I"/>
</dbReference>
<dbReference type="InterPro" id="IPR016055">
    <property type="entry name" value="A-D-PHexomutase_a/b/a-I/II/III"/>
</dbReference>
<dbReference type="InterPro" id="IPR005845">
    <property type="entry name" value="A-D-PHexomutase_a/b/a-II"/>
</dbReference>
<dbReference type="InterPro" id="IPR005846">
    <property type="entry name" value="A-D-PHexomutase_a/b/a-III"/>
</dbReference>
<dbReference type="InterPro" id="IPR005843">
    <property type="entry name" value="A-D-PHexomutase_C"/>
</dbReference>
<dbReference type="InterPro" id="IPR036900">
    <property type="entry name" value="A-D-PHexomutase_C_sf"/>
</dbReference>
<dbReference type="InterPro" id="IPR016066">
    <property type="entry name" value="A-D-PHexomutase_CS"/>
</dbReference>
<dbReference type="InterPro" id="IPR005841">
    <property type="entry name" value="Alpha-D-phosphohexomutase_SF"/>
</dbReference>
<dbReference type="InterPro" id="IPR006352">
    <property type="entry name" value="GlmM_bact"/>
</dbReference>
<dbReference type="InterPro" id="IPR050060">
    <property type="entry name" value="Phosphoglucosamine_mutase"/>
</dbReference>
<dbReference type="NCBIfam" id="TIGR01455">
    <property type="entry name" value="glmM"/>
    <property type="match status" value="1"/>
</dbReference>
<dbReference type="NCBIfam" id="NF008139">
    <property type="entry name" value="PRK10887.1"/>
    <property type="match status" value="1"/>
</dbReference>
<dbReference type="PANTHER" id="PTHR42946:SF1">
    <property type="entry name" value="PHOSPHOGLUCOMUTASE (ALPHA-D-GLUCOSE-1,6-BISPHOSPHATE-DEPENDENT)"/>
    <property type="match status" value="1"/>
</dbReference>
<dbReference type="PANTHER" id="PTHR42946">
    <property type="entry name" value="PHOSPHOHEXOSE MUTASE"/>
    <property type="match status" value="1"/>
</dbReference>
<dbReference type="Pfam" id="PF02878">
    <property type="entry name" value="PGM_PMM_I"/>
    <property type="match status" value="1"/>
</dbReference>
<dbReference type="Pfam" id="PF02879">
    <property type="entry name" value="PGM_PMM_II"/>
    <property type="match status" value="1"/>
</dbReference>
<dbReference type="Pfam" id="PF02880">
    <property type="entry name" value="PGM_PMM_III"/>
    <property type="match status" value="1"/>
</dbReference>
<dbReference type="Pfam" id="PF00408">
    <property type="entry name" value="PGM_PMM_IV"/>
    <property type="match status" value="1"/>
</dbReference>
<dbReference type="PRINTS" id="PR00509">
    <property type="entry name" value="PGMPMM"/>
</dbReference>
<dbReference type="SUPFAM" id="SSF55957">
    <property type="entry name" value="Phosphoglucomutase, C-terminal domain"/>
    <property type="match status" value="1"/>
</dbReference>
<dbReference type="SUPFAM" id="SSF53738">
    <property type="entry name" value="Phosphoglucomutase, first 3 domains"/>
    <property type="match status" value="3"/>
</dbReference>
<dbReference type="PROSITE" id="PS00710">
    <property type="entry name" value="PGM_PMM"/>
    <property type="match status" value="1"/>
</dbReference>
<evidence type="ECO:0000255" key="1">
    <source>
        <dbReference type="HAMAP-Rule" id="MF_01554"/>
    </source>
</evidence>
<proteinExistence type="inferred from homology"/>